<reference key="1">
    <citation type="submission" date="2011-03" db="EMBL/GenBank/DDBJ databases">
        <title>Conotoxins of Conus californicus.</title>
        <authorList>
            <person name="Elliger C.A."/>
            <person name="Gilly W.F."/>
            <person name="Lebaric Z.N."/>
        </authorList>
    </citation>
    <scope>NUCLEOTIDE SEQUENCE [MRNA]</scope>
    <source>
        <tissue>Venom duct</tissue>
    </source>
</reference>
<name>CUC11_CONCL</name>
<protein>
    <recommendedName>
        <fullName>Conotoxin Cal12.1p1</fullName>
    </recommendedName>
</protein>
<dbReference type="EMBL" id="JF680993">
    <property type="protein sequence ID" value="AEC22829.1"/>
    <property type="molecule type" value="mRNA"/>
</dbReference>
<dbReference type="GO" id="GO:0005576">
    <property type="term" value="C:extracellular region"/>
    <property type="evidence" value="ECO:0007669"/>
    <property type="project" value="UniProtKB-SubCell"/>
</dbReference>
<dbReference type="GO" id="GO:0090729">
    <property type="term" value="F:toxin activity"/>
    <property type="evidence" value="ECO:0007669"/>
    <property type="project" value="UniProtKB-KW"/>
</dbReference>
<organism>
    <name type="scientific">Californiconus californicus</name>
    <name type="common">California cone</name>
    <name type="synonym">Conus californicus</name>
    <dbReference type="NCBI Taxonomy" id="1736779"/>
    <lineage>
        <taxon>Eukaryota</taxon>
        <taxon>Metazoa</taxon>
        <taxon>Spiralia</taxon>
        <taxon>Lophotrochozoa</taxon>
        <taxon>Mollusca</taxon>
        <taxon>Gastropoda</taxon>
        <taxon>Caenogastropoda</taxon>
        <taxon>Neogastropoda</taxon>
        <taxon>Conoidea</taxon>
        <taxon>Conidae</taxon>
        <taxon>Californiconus</taxon>
    </lineage>
</organism>
<feature type="propeptide" id="PRO_0000414952" evidence="1">
    <location>
        <begin position="1" status="less than"/>
        <end position="23"/>
    </location>
</feature>
<feature type="peptide" id="PRO_5000746008" description="Conotoxin Cal12.1p1">
    <location>
        <begin position="25"/>
        <end position="68"/>
    </location>
</feature>
<feature type="non-terminal residue">
    <location>
        <position position="1"/>
    </location>
</feature>
<proteinExistence type="evidence at transcript level"/>
<accession>F5CEP0</accession>
<sequence length="68" mass="7632">DLITNSYTRGKPRHVTSWRNLRTRDVCKKSPGKCIHNGCFCEQDKPQGNCCDSGGCTVKWWCPGTKGD</sequence>
<keyword id="KW-1015">Disulfide bond</keyword>
<keyword id="KW-0528">Neurotoxin</keyword>
<keyword id="KW-0964">Secreted</keyword>
<keyword id="KW-0800">Toxin</keyword>
<evidence type="ECO:0000250" key="1"/>
<comment type="subcellular location">
    <subcellularLocation>
        <location evidence="1">Secreted</location>
    </subcellularLocation>
</comment>
<comment type="tissue specificity">
    <text>Expressed by the venom duct.</text>
</comment>
<comment type="domain">
    <text>The cysteine framework is XII (C-C-C-C-CC-C-C).</text>
</comment>
<comment type="PTM">
    <text>Contains 4 disulfide bonds.</text>
</comment>